<sequence length="954" mass="105578">MAAEPRRVSFRDGRLASRKAEEAALRRHQAATWLESVIGPFGLSRCPSEQEFVAAVRNGIVLCKAINKIQPGAVPKVVANASCDSQPSTAFQYFENIRNFLVAVQELKLPCFEASDLEKDNIDAGSVGKIVDCVISLKSYHEWRQRGGSYGHLKHLKSPLATRSASHVQSEYVCSGSSSTPKRLDLVETDTERQPNQNVGPNCQEAMERLQKVILDCMISCKENLDNDSLKKDPYKLVGTILSRQLEKEQSSNSQVENRRRLLQAQESELLELKSMFQEVKIDFRTLKTQFQDDIIKLGDNVQGLSKAALGYNQAVKENKSLYNLLQELRGNIRVFCRIRPLINSESISSIEHIGNDGSIMVCDPLKPQTTRKIFQFNKIFGPTTTQDEVYKETQYLIRSVMDGYNVCIFAYGQTGSGKTHTMCGPSGGLSSQDLGISYMALNDLFKTSTSREDVKYDIHVQMVEIYNEQVRDLLNEDTSNIRTSSNGLLNLPDAKKCPVQSPSDVINLMLLGEKHRASSPTAMNHRSSRSHSILTVHVNGKDMSGNVTRSSLHLVDLAGSERVDRSEATGDRLKEAQHINKSLSCLGDVITALAQKNSHIPYRNSKLTQLLQSSLGGNAKTLMFAHISPEADSYVETLSTLKFAQRASCVELGTAHANKESNEIRELKEQVENLKRALAAKELEKSSFKLKENTVVRERAKQVPERTPPRPRRLSLENTGIGKGSIPDRKGPKSPLSVTKLNRDHATIHDSIDGFNHHIMHQGSVMQMSATSSEDPVREETEKIITTVDTVPFCGLHPDAYISSKQSGLDTLLRTPCRSRNLNLEVGQTDEPSSSAKLEKMTSSNATKKGSHLRKSIQSSIGKLIHGSERRNVQHLGQATPAKIANSTNNDVPSSITPDLRLRRRQSLTGLPPPPSTMSRRSSLGGKSDIGSDKRGAKTPPPVNSAAKAKRWL</sequence>
<gene>
    <name evidence="6" type="primary">KIN14A</name>
    <name evidence="8" type="ordered locus">Os01g0243100</name>
    <name evidence="6" type="ordered locus">LOC_Os01g14090</name>
    <name evidence="7" type="ORF">B1066G12.23</name>
    <name evidence="9" type="ORF">OsJ_01073</name>
</gene>
<accession>B9EUM5</accession>
<accession>Q0JP53</accession>
<accession>Q5NA73</accession>
<comment type="similarity">
    <text evidence="5">Belongs to the TRAFAC class myosin-kinesin ATPase superfamily. Kinesin family. KIN-14 subfamily.</text>
</comment>
<comment type="sequence caution" evidence="6">
    <conflict type="erroneous gene model prediction">
        <sequence resource="EMBL-CDS" id="BAD81633"/>
    </conflict>
</comment>
<comment type="sequence caution" evidence="6">
    <conflict type="erroneous gene model prediction">
        <sequence resource="EMBL-CDS" id="BAF04475"/>
    </conflict>
</comment>
<comment type="sequence caution" evidence="6">
    <conflict type="erroneous initiation">
        <sequence resource="EMBL-CDS" id="BAG89037"/>
    </conflict>
    <text>Truncated N-terminus.</text>
</comment>
<comment type="sequence caution" evidence="6">
    <conflict type="erroneous gene model prediction">
        <sequence resource="EMBL-CDS" id="BAS71285"/>
    </conflict>
</comment>
<comment type="sequence caution" evidence="6">
    <conflict type="erroneous gene model prediction">
        <sequence resource="EMBL-CDS" id="EEE54217"/>
    </conflict>
</comment>
<proteinExistence type="evidence at transcript level"/>
<organism>
    <name type="scientific">Oryza sativa subsp. japonica</name>
    <name type="common">Rice</name>
    <dbReference type="NCBI Taxonomy" id="39947"/>
    <lineage>
        <taxon>Eukaryota</taxon>
        <taxon>Viridiplantae</taxon>
        <taxon>Streptophyta</taxon>
        <taxon>Embryophyta</taxon>
        <taxon>Tracheophyta</taxon>
        <taxon>Spermatophyta</taxon>
        <taxon>Magnoliopsida</taxon>
        <taxon>Liliopsida</taxon>
        <taxon>Poales</taxon>
        <taxon>Poaceae</taxon>
        <taxon>BOP clade</taxon>
        <taxon>Oryzoideae</taxon>
        <taxon>Oryzeae</taxon>
        <taxon>Oryzinae</taxon>
        <taxon>Oryza</taxon>
        <taxon>Oryza sativa</taxon>
    </lineage>
</organism>
<evidence type="ECO:0000255" key="1"/>
<evidence type="ECO:0000255" key="2">
    <source>
        <dbReference type="PROSITE-ProRule" id="PRU00044"/>
    </source>
</evidence>
<evidence type="ECO:0000255" key="3">
    <source>
        <dbReference type="PROSITE-ProRule" id="PRU00283"/>
    </source>
</evidence>
<evidence type="ECO:0000256" key="4">
    <source>
        <dbReference type="SAM" id="MobiDB-lite"/>
    </source>
</evidence>
<evidence type="ECO:0000303" key="5">
    <source>
    </source>
</evidence>
<evidence type="ECO:0000305" key="6"/>
<evidence type="ECO:0000312" key="7">
    <source>
        <dbReference type="EMBL" id="BAD81633.1"/>
    </source>
</evidence>
<evidence type="ECO:0000312" key="8">
    <source>
        <dbReference type="EMBL" id="BAS71285.1"/>
    </source>
</evidence>
<evidence type="ECO:0000312" key="9">
    <source>
        <dbReference type="EMBL" id="EEE54217.1"/>
    </source>
</evidence>
<reference key="1">
    <citation type="journal article" date="2002" name="Nature">
        <title>The genome sequence and structure of rice chromosome 1.</title>
        <authorList>
            <person name="Sasaki T."/>
            <person name="Matsumoto T."/>
            <person name="Yamamoto K."/>
            <person name="Sakata K."/>
            <person name="Baba T."/>
            <person name="Katayose Y."/>
            <person name="Wu J."/>
            <person name="Niimura Y."/>
            <person name="Cheng Z."/>
            <person name="Nagamura Y."/>
            <person name="Antonio B.A."/>
            <person name="Kanamori H."/>
            <person name="Hosokawa S."/>
            <person name="Masukawa M."/>
            <person name="Arikawa K."/>
            <person name="Chiden Y."/>
            <person name="Hayashi M."/>
            <person name="Okamoto M."/>
            <person name="Ando T."/>
            <person name="Aoki H."/>
            <person name="Arita K."/>
            <person name="Hamada M."/>
            <person name="Harada C."/>
            <person name="Hijishita S."/>
            <person name="Honda M."/>
            <person name="Ichikawa Y."/>
            <person name="Idonuma A."/>
            <person name="Iijima M."/>
            <person name="Ikeda M."/>
            <person name="Ikeno M."/>
            <person name="Ito S."/>
            <person name="Ito T."/>
            <person name="Ito Y."/>
            <person name="Ito Y."/>
            <person name="Iwabuchi A."/>
            <person name="Kamiya K."/>
            <person name="Karasawa W."/>
            <person name="Katagiri S."/>
            <person name="Kikuta A."/>
            <person name="Kobayashi N."/>
            <person name="Kono I."/>
            <person name="Machita K."/>
            <person name="Maehara T."/>
            <person name="Mizuno H."/>
            <person name="Mizubayashi T."/>
            <person name="Mukai Y."/>
            <person name="Nagasaki H."/>
            <person name="Nakashima M."/>
            <person name="Nakama Y."/>
            <person name="Nakamichi Y."/>
            <person name="Nakamura M."/>
            <person name="Namiki N."/>
            <person name="Negishi M."/>
            <person name="Ohta I."/>
            <person name="Ono N."/>
            <person name="Saji S."/>
            <person name="Sakai K."/>
            <person name="Shibata M."/>
            <person name="Shimokawa T."/>
            <person name="Shomura A."/>
            <person name="Song J."/>
            <person name="Takazaki Y."/>
            <person name="Terasawa K."/>
            <person name="Tsuji K."/>
            <person name="Waki K."/>
            <person name="Yamagata H."/>
            <person name="Yamane H."/>
            <person name="Yoshiki S."/>
            <person name="Yoshihara R."/>
            <person name="Yukawa K."/>
            <person name="Zhong H."/>
            <person name="Iwama H."/>
            <person name="Endo T."/>
            <person name="Ito H."/>
            <person name="Hahn J.H."/>
            <person name="Kim H.-I."/>
            <person name="Eun M.-Y."/>
            <person name="Yano M."/>
            <person name="Jiang J."/>
            <person name="Gojobori T."/>
        </authorList>
    </citation>
    <scope>NUCLEOTIDE SEQUENCE [LARGE SCALE GENOMIC DNA]</scope>
    <source>
        <strain>cv. Nipponbare</strain>
    </source>
</reference>
<reference key="2">
    <citation type="journal article" date="2005" name="Nature">
        <title>The map-based sequence of the rice genome.</title>
        <authorList>
            <consortium name="International rice genome sequencing project (IRGSP)"/>
        </authorList>
    </citation>
    <scope>NUCLEOTIDE SEQUENCE [LARGE SCALE GENOMIC DNA]</scope>
    <source>
        <strain>cv. Nipponbare</strain>
    </source>
</reference>
<reference key="3">
    <citation type="journal article" date="2008" name="Nucleic Acids Res.">
        <title>The rice annotation project database (RAP-DB): 2008 update.</title>
        <authorList>
            <consortium name="The rice annotation project (RAP)"/>
        </authorList>
    </citation>
    <scope>GENOME REANNOTATION</scope>
    <source>
        <strain>cv. Nipponbare</strain>
    </source>
</reference>
<reference key="4">
    <citation type="journal article" date="2013" name="Rice">
        <title>Improvement of the Oryza sativa Nipponbare reference genome using next generation sequence and optical map data.</title>
        <authorList>
            <person name="Kawahara Y."/>
            <person name="de la Bastide M."/>
            <person name="Hamilton J.P."/>
            <person name="Kanamori H."/>
            <person name="McCombie W.R."/>
            <person name="Ouyang S."/>
            <person name="Schwartz D.C."/>
            <person name="Tanaka T."/>
            <person name="Wu J."/>
            <person name="Zhou S."/>
            <person name="Childs K.L."/>
            <person name="Davidson R.M."/>
            <person name="Lin H."/>
            <person name="Quesada-Ocampo L."/>
            <person name="Vaillancourt B."/>
            <person name="Sakai H."/>
            <person name="Lee S.S."/>
            <person name="Kim J."/>
            <person name="Numa H."/>
            <person name="Itoh T."/>
            <person name="Buell C.R."/>
            <person name="Matsumoto T."/>
        </authorList>
    </citation>
    <scope>GENOME REANNOTATION</scope>
    <source>
        <strain>cv. Nipponbare</strain>
    </source>
</reference>
<reference key="5">
    <citation type="journal article" date="2005" name="PLoS Biol.">
        <title>The genomes of Oryza sativa: a history of duplications.</title>
        <authorList>
            <person name="Yu J."/>
            <person name="Wang J."/>
            <person name="Lin W."/>
            <person name="Li S."/>
            <person name="Li H."/>
            <person name="Zhou J."/>
            <person name="Ni P."/>
            <person name="Dong W."/>
            <person name="Hu S."/>
            <person name="Zeng C."/>
            <person name="Zhang J."/>
            <person name="Zhang Y."/>
            <person name="Li R."/>
            <person name="Xu Z."/>
            <person name="Li S."/>
            <person name="Li X."/>
            <person name="Zheng H."/>
            <person name="Cong L."/>
            <person name="Lin L."/>
            <person name="Yin J."/>
            <person name="Geng J."/>
            <person name="Li G."/>
            <person name="Shi J."/>
            <person name="Liu J."/>
            <person name="Lv H."/>
            <person name="Li J."/>
            <person name="Wang J."/>
            <person name="Deng Y."/>
            <person name="Ran L."/>
            <person name="Shi X."/>
            <person name="Wang X."/>
            <person name="Wu Q."/>
            <person name="Li C."/>
            <person name="Ren X."/>
            <person name="Wang J."/>
            <person name="Wang X."/>
            <person name="Li D."/>
            <person name="Liu D."/>
            <person name="Zhang X."/>
            <person name="Ji Z."/>
            <person name="Zhao W."/>
            <person name="Sun Y."/>
            <person name="Zhang Z."/>
            <person name="Bao J."/>
            <person name="Han Y."/>
            <person name="Dong L."/>
            <person name="Ji J."/>
            <person name="Chen P."/>
            <person name="Wu S."/>
            <person name="Liu J."/>
            <person name="Xiao Y."/>
            <person name="Bu D."/>
            <person name="Tan J."/>
            <person name="Yang L."/>
            <person name="Ye C."/>
            <person name="Zhang J."/>
            <person name="Xu J."/>
            <person name="Zhou Y."/>
            <person name="Yu Y."/>
            <person name="Zhang B."/>
            <person name="Zhuang S."/>
            <person name="Wei H."/>
            <person name="Liu B."/>
            <person name="Lei M."/>
            <person name="Yu H."/>
            <person name="Li Y."/>
            <person name="Xu H."/>
            <person name="Wei S."/>
            <person name="He X."/>
            <person name="Fang L."/>
            <person name="Zhang Z."/>
            <person name="Zhang Y."/>
            <person name="Huang X."/>
            <person name="Su Z."/>
            <person name="Tong W."/>
            <person name="Li J."/>
            <person name="Tong Z."/>
            <person name="Li S."/>
            <person name="Ye J."/>
            <person name="Wang L."/>
            <person name="Fang L."/>
            <person name="Lei T."/>
            <person name="Chen C.-S."/>
            <person name="Chen H.-C."/>
            <person name="Xu Z."/>
            <person name="Li H."/>
            <person name="Huang H."/>
            <person name="Zhang F."/>
            <person name="Xu H."/>
            <person name="Li N."/>
            <person name="Zhao C."/>
            <person name="Li S."/>
            <person name="Dong L."/>
            <person name="Huang Y."/>
            <person name="Li L."/>
            <person name="Xi Y."/>
            <person name="Qi Q."/>
            <person name="Li W."/>
            <person name="Zhang B."/>
            <person name="Hu W."/>
            <person name="Zhang Y."/>
            <person name="Tian X."/>
            <person name="Jiao Y."/>
            <person name="Liang X."/>
            <person name="Jin J."/>
            <person name="Gao L."/>
            <person name="Zheng W."/>
            <person name="Hao B."/>
            <person name="Liu S.-M."/>
            <person name="Wang W."/>
            <person name="Yuan L."/>
            <person name="Cao M."/>
            <person name="McDermott J."/>
            <person name="Samudrala R."/>
            <person name="Wang J."/>
            <person name="Wong G.K.-S."/>
            <person name="Yang H."/>
        </authorList>
    </citation>
    <scope>NUCLEOTIDE SEQUENCE [LARGE SCALE GENOMIC DNA]</scope>
    <source>
        <strain>cv. Nipponbare</strain>
    </source>
</reference>
<reference key="6">
    <citation type="journal article" date="2003" name="Science">
        <title>Collection, mapping, and annotation of over 28,000 cDNA clones from japonica rice.</title>
        <authorList>
            <consortium name="The rice full-length cDNA consortium"/>
        </authorList>
    </citation>
    <scope>NUCLEOTIDE SEQUENCE [LARGE SCALE MRNA] OF 482-954</scope>
    <source>
        <strain>cv. Nipponbare</strain>
    </source>
</reference>
<reference key="7">
    <citation type="journal article" date="2009" name="Ann. Bot.">
        <title>Evaluating the microtubule cytoskeleton and its interacting proteins in monocots by mining the rice genome.</title>
        <authorList>
            <person name="Guo L."/>
            <person name="Ho C.M."/>
            <person name="Kong Z."/>
            <person name="Lee Y.R."/>
            <person name="Qian Q."/>
            <person name="Liu B."/>
        </authorList>
    </citation>
    <scope>GENE FAMILY</scope>
    <scope>NOMENCLATURE</scope>
</reference>
<dbReference type="EMBL" id="AP003201">
    <property type="protein sequence ID" value="BAD81633.1"/>
    <property type="status" value="ALT_SEQ"/>
    <property type="molecule type" value="Genomic_DNA"/>
</dbReference>
<dbReference type="EMBL" id="AP008207">
    <property type="protein sequence ID" value="BAF04475.1"/>
    <property type="status" value="ALT_SEQ"/>
    <property type="molecule type" value="Genomic_DNA"/>
</dbReference>
<dbReference type="EMBL" id="AP014957">
    <property type="protein sequence ID" value="BAS71285.1"/>
    <property type="status" value="ALT_SEQ"/>
    <property type="molecule type" value="Genomic_DNA"/>
</dbReference>
<dbReference type="EMBL" id="CM000138">
    <property type="protein sequence ID" value="EEE54217.1"/>
    <property type="status" value="ALT_SEQ"/>
    <property type="molecule type" value="Genomic_DNA"/>
</dbReference>
<dbReference type="EMBL" id="AK064212">
    <property type="protein sequence ID" value="BAG89037.1"/>
    <property type="status" value="ALT_INIT"/>
    <property type="molecule type" value="mRNA"/>
</dbReference>
<dbReference type="SMR" id="B9EUM5"/>
<dbReference type="FunCoup" id="B9EUM5">
    <property type="interactions" value="6"/>
</dbReference>
<dbReference type="STRING" id="39947.B9EUM5"/>
<dbReference type="PaxDb" id="39947-B9EUM5"/>
<dbReference type="KEGG" id="dosa:Os01g0243100"/>
<dbReference type="eggNOG" id="KOG0239">
    <property type="taxonomic scope" value="Eukaryota"/>
</dbReference>
<dbReference type="InParanoid" id="B9EUM5"/>
<dbReference type="Proteomes" id="UP000000763">
    <property type="component" value="Chromosome 1"/>
</dbReference>
<dbReference type="Proteomes" id="UP000007752">
    <property type="component" value="Chromosome 1"/>
</dbReference>
<dbReference type="Proteomes" id="UP000059680">
    <property type="component" value="Chromosome 1"/>
</dbReference>
<dbReference type="GO" id="GO:0005874">
    <property type="term" value="C:microtubule"/>
    <property type="evidence" value="ECO:0007669"/>
    <property type="project" value="UniProtKB-KW"/>
</dbReference>
<dbReference type="GO" id="GO:0015630">
    <property type="term" value="C:microtubule cytoskeleton"/>
    <property type="evidence" value="ECO:0000318"/>
    <property type="project" value="GO_Central"/>
</dbReference>
<dbReference type="GO" id="GO:0005524">
    <property type="term" value="F:ATP binding"/>
    <property type="evidence" value="ECO:0007669"/>
    <property type="project" value="UniProtKB-KW"/>
</dbReference>
<dbReference type="GO" id="GO:0008017">
    <property type="term" value="F:microtubule binding"/>
    <property type="evidence" value="ECO:0000318"/>
    <property type="project" value="GO_Central"/>
</dbReference>
<dbReference type="GO" id="GO:0003777">
    <property type="term" value="F:microtubule motor activity"/>
    <property type="evidence" value="ECO:0007669"/>
    <property type="project" value="InterPro"/>
</dbReference>
<dbReference type="GO" id="GO:0007018">
    <property type="term" value="P:microtubule-based movement"/>
    <property type="evidence" value="ECO:0007669"/>
    <property type="project" value="InterPro"/>
</dbReference>
<dbReference type="GO" id="GO:0007017">
    <property type="term" value="P:microtubule-based process"/>
    <property type="evidence" value="ECO:0000318"/>
    <property type="project" value="GO_Central"/>
</dbReference>
<dbReference type="CDD" id="cd21203">
    <property type="entry name" value="CH_AtKIN14-like"/>
    <property type="match status" value="1"/>
</dbReference>
<dbReference type="FunFam" id="3.40.850.10:FF:000103">
    <property type="entry name" value="Kinesin-like protein KIN-14A"/>
    <property type="match status" value="1"/>
</dbReference>
<dbReference type="FunFam" id="1.10.418.10:FF:000073">
    <property type="entry name" value="Kinesin-like protein KIN-14L"/>
    <property type="match status" value="1"/>
</dbReference>
<dbReference type="Gene3D" id="1.10.418.10">
    <property type="entry name" value="Calponin-like domain"/>
    <property type="match status" value="1"/>
</dbReference>
<dbReference type="Gene3D" id="3.40.850.10">
    <property type="entry name" value="Kinesin motor domain"/>
    <property type="match status" value="1"/>
</dbReference>
<dbReference type="InterPro" id="IPR001715">
    <property type="entry name" value="CH_dom"/>
</dbReference>
<dbReference type="InterPro" id="IPR036872">
    <property type="entry name" value="CH_dom_sf"/>
</dbReference>
<dbReference type="InterPro" id="IPR027640">
    <property type="entry name" value="Kinesin-like_fam"/>
</dbReference>
<dbReference type="InterPro" id="IPR019821">
    <property type="entry name" value="Kinesin_motor_CS"/>
</dbReference>
<dbReference type="InterPro" id="IPR001752">
    <property type="entry name" value="Kinesin_motor_dom"/>
</dbReference>
<dbReference type="InterPro" id="IPR036961">
    <property type="entry name" value="Kinesin_motor_dom_sf"/>
</dbReference>
<dbReference type="InterPro" id="IPR027417">
    <property type="entry name" value="P-loop_NTPase"/>
</dbReference>
<dbReference type="PANTHER" id="PTHR47972:SF4">
    <property type="entry name" value="KINESIN-LIKE PROTEIN KIN-14L"/>
    <property type="match status" value="1"/>
</dbReference>
<dbReference type="PANTHER" id="PTHR47972">
    <property type="entry name" value="KINESIN-LIKE PROTEIN KLP-3"/>
    <property type="match status" value="1"/>
</dbReference>
<dbReference type="Pfam" id="PF00307">
    <property type="entry name" value="CH"/>
    <property type="match status" value="1"/>
</dbReference>
<dbReference type="Pfam" id="PF00225">
    <property type="entry name" value="Kinesin"/>
    <property type="match status" value="1"/>
</dbReference>
<dbReference type="PRINTS" id="PR00380">
    <property type="entry name" value="KINESINHEAVY"/>
</dbReference>
<dbReference type="SMART" id="SM00033">
    <property type="entry name" value="CH"/>
    <property type="match status" value="1"/>
</dbReference>
<dbReference type="SMART" id="SM00129">
    <property type="entry name" value="KISc"/>
    <property type="match status" value="1"/>
</dbReference>
<dbReference type="SUPFAM" id="SSF47576">
    <property type="entry name" value="Calponin-homology domain, CH-domain"/>
    <property type="match status" value="1"/>
</dbReference>
<dbReference type="SUPFAM" id="SSF52540">
    <property type="entry name" value="P-loop containing nucleoside triphosphate hydrolases"/>
    <property type="match status" value="1"/>
</dbReference>
<dbReference type="PROSITE" id="PS50021">
    <property type="entry name" value="CH"/>
    <property type="match status" value="1"/>
</dbReference>
<dbReference type="PROSITE" id="PS00411">
    <property type="entry name" value="KINESIN_MOTOR_1"/>
    <property type="match status" value="1"/>
</dbReference>
<dbReference type="PROSITE" id="PS50067">
    <property type="entry name" value="KINESIN_MOTOR_2"/>
    <property type="match status" value="1"/>
</dbReference>
<keyword id="KW-0067">ATP-binding</keyword>
<keyword id="KW-0175">Coiled coil</keyword>
<keyword id="KW-0493">Microtubule</keyword>
<keyword id="KW-0505">Motor protein</keyword>
<keyword id="KW-0547">Nucleotide-binding</keyword>
<keyword id="KW-1185">Reference proteome</keyword>
<name>KN14A_ORYSJ</name>
<protein>
    <recommendedName>
        <fullName evidence="6">Kinesin-like protein KIN-14A</fullName>
    </recommendedName>
</protein>
<feature type="chain" id="PRO_0000438627" description="Kinesin-like protein KIN-14A">
    <location>
        <begin position="1"/>
        <end position="954"/>
    </location>
</feature>
<feature type="domain" description="Calponin-homology (CH)" evidence="2">
    <location>
        <begin position="24"/>
        <end position="142"/>
    </location>
</feature>
<feature type="domain" description="Kinesin motor" evidence="3">
    <location>
        <begin position="332"/>
        <end position="651"/>
    </location>
</feature>
<feature type="region of interest" description="Disordered" evidence="4">
    <location>
        <begin position="697"/>
        <end position="743"/>
    </location>
</feature>
<feature type="region of interest" description="Disordered" evidence="4">
    <location>
        <begin position="824"/>
        <end position="858"/>
    </location>
</feature>
<feature type="region of interest" description="Disordered" evidence="4">
    <location>
        <begin position="882"/>
        <end position="954"/>
    </location>
</feature>
<feature type="coiled-coil region" evidence="1">
    <location>
        <begin position="242"/>
        <end position="293"/>
    </location>
</feature>
<feature type="coiled-coil region" evidence="1">
    <location>
        <begin position="656"/>
        <end position="692"/>
    </location>
</feature>
<feature type="compositionally biased region" description="Basic and acidic residues" evidence="4">
    <location>
        <begin position="697"/>
        <end position="709"/>
    </location>
</feature>
<feature type="compositionally biased region" description="Polar residues" evidence="4">
    <location>
        <begin position="831"/>
        <end position="849"/>
    </location>
</feature>
<feature type="compositionally biased region" description="Polar residues" evidence="4">
    <location>
        <begin position="886"/>
        <end position="898"/>
    </location>
</feature>
<feature type="binding site" evidence="3">
    <location>
        <begin position="413"/>
        <end position="420"/>
    </location>
    <ligand>
        <name>ATP</name>
        <dbReference type="ChEBI" id="CHEBI:30616"/>
    </ligand>
</feature>